<protein>
    <recommendedName>
        <fullName evidence="1">Cytidylate kinase</fullName>
        <shortName evidence="1">CK</shortName>
        <ecNumber evidence="1">2.7.4.25</ecNumber>
    </recommendedName>
    <alternativeName>
        <fullName evidence="1">Cytidine monophosphate kinase</fullName>
        <shortName evidence="1">CMP kinase</shortName>
    </alternativeName>
</protein>
<proteinExistence type="inferred from homology"/>
<dbReference type="EC" id="2.7.4.25" evidence="1"/>
<dbReference type="EMBL" id="CP001144">
    <property type="protein sequence ID" value="ACH75191.1"/>
    <property type="molecule type" value="Genomic_DNA"/>
</dbReference>
<dbReference type="RefSeq" id="WP_000125007.1">
    <property type="nucleotide sequence ID" value="NC_011205.1"/>
</dbReference>
<dbReference type="SMR" id="B5FQ53"/>
<dbReference type="KEGG" id="sed:SeD_A1045"/>
<dbReference type="HOGENOM" id="CLU_079959_0_2_6"/>
<dbReference type="Proteomes" id="UP000008322">
    <property type="component" value="Chromosome"/>
</dbReference>
<dbReference type="GO" id="GO:0005829">
    <property type="term" value="C:cytosol"/>
    <property type="evidence" value="ECO:0007669"/>
    <property type="project" value="TreeGrafter"/>
</dbReference>
<dbReference type="GO" id="GO:0005524">
    <property type="term" value="F:ATP binding"/>
    <property type="evidence" value="ECO:0007669"/>
    <property type="project" value="UniProtKB-UniRule"/>
</dbReference>
<dbReference type="GO" id="GO:0036430">
    <property type="term" value="F:CMP kinase activity"/>
    <property type="evidence" value="ECO:0007669"/>
    <property type="project" value="RHEA"/>
</dbReference>
<dbReference type="GO" id="GO:0036431">
    <property type="term" value="F:dCMP kinase activity"/>
    <property type="evidence" value="ECO:0007669"/>
    <property type="project" value="RHEA"/>
</dbReference>
<dbReference type="GO" id="GO:0015949">
    <property type="term" value="P:nucleobase-containing small molecule interconversion"/>
    <property type="evidence" value="ECO:0007669"/>
    <property type="project" value="TreeGrafter"/>
</dbReference>
<dbReference type="GO" id="GO:0006220">
    <property type="term" value="P:pyrimidine nucleotide metabolic process"/>
    <property type="evidence" value="ECO:0007669"/>
    <property type="project" value="UniProtKB-UniRule"/>
</dbReference>
<dbReference type="CDD" id="cd02020">
    <property type="entry name" value="CMPK"/>
    <property type="match status" value="1"/>
</dbReference>
<dbReference type="FunFam" id="3.40.50.300:FF:000262">
    <property type="entry name" value="Cytidylate kinase"/>
    <property type="match status" value="1"/>
</dbReference>
<dbReference type="Gene3D" id="3.40.50.300">
    <property type="entry name" value="P-loop containing nucleotide triphosphate hydrolases"/>
    <property type="match status" value="1"/>
</dbReference>
<dbReference type="HAMAP" id="MF_00238">
    <property type="entry name" value="Cytidyl_kinase_type1"/>
    <property type="match status" value="1"/>
</dbReference>
<dbReference type="InterPro" id="IPR003136">
    <property type="entry name" value="Cytidylate_kin"/>
</dbReference>
<dbReference type="InterPro" id="IPR011994">
    <property type="entry name" value="Cytidylate_kinase_dom"/>
</dbReference>
<dbReference type="InterPro" id="IPR027417">
    <property type="entry name" value="P-loop_NTPase"/>
</dbReference>
<dbReference type="NCBIfam" id="TIGR00017">
    <property type="entry name" value="cmk"/>
    <property type="match status" value="1"/>
</dbReference>
<dbReference type="PANTHER" id="PTHR21299:SF2">
    <property type="entry name" value="CYTIDYLATE KINASE"/>
    <property type="match status" value="1"/>
</dbReference>
<dbReference type="PANTHER" id="PTHR21299">
    <property type="entry name" value="CYTIDYLATE KINASE/PANTOATE-BETA-ALANINE LIGASE"/>
    <property type="match status" value="1"/>
</dbReference>
<dbReference type="Pfam" id="PF02224">
    <property type="entry name" value="Cytidylate_kin"/>
    <property type="match status" value="1"/>
</dbReference>
<dbReference type="SUPFAM" id="SSF52540">
    <property type="entry name" value="P-loop containing nucleoside triphosphate hydrolases"/>
    <property type="match status" value="1"/>
</dbReference>
<gene>
    <name evidence="1" type="primary">cmk</name>
    <name type="ordered locus">SeD_A1045</name>
</gene>
<evidence type="ECO:0000255" key="1">
    <source>
        <dbReference type="HAMAP-Rule" id="MF_00238"/>
    </source>
</evidence>
<name>KCY_SALDC</name>
<sequence length="227" mass="24760">MTAIAPVITIDGPSGAGKGTLCKAMAEALQWHLLDSGAIYRVLALAALHHHVDLASEDALVPLASHLDVRFVSTDGNLEVILEGEDVSGEIRTQEVANAASQVAAFPRVREALLRRQRAFREAPGLIADGRDMGTVVFPDAPVKIFLDASSEERAHRRMLQLQENGFSVNFERLLAEIKERDDRDRNRAVAPLVPAADALVLDSTRLSIEQVIEKALQYARQKLALA</sequence>
<accession>B5FQ53</accession>
<reference key="1">
    <citation type="journal article" date="2011" name="J. Bacteriol.">
        <title>Comparative genomics of 28 Salmonella enterica isolates: evidence for CRISPR-mediated adaptive sublineage evolution.</title>
        <authorList>
            <person name="Fricke W.F."/>
            <person name="Mammel M.K."/>
            <person name="McDermott P.F."/>
            <person name="Tartera C."/>
            <person name="White D.G."/>
            <person name="Leclerc J.E."/>
            <person name="Ravel J."/>
            <person name="Cebula T.A."/>
        </authorList>
    </citation>
    <scope>NUCLEOTIDE SEQUENCE [LARGE SCALE GENOMIC DNA]</scope>
    <source>
        <strain>CT_02021853</strain>
    </source>
</reference>
<comment type="catalytic activity">
    <reaction evidence="1">
        <text>CMP + ATP = CDP + ADP</text>
        <dbReference type="Rhea" id="RHEA:11600"/>
        <dbReference type="ChEBI" id="CHEBI:30616"/>
        <dbReference type="ChEBI" id="CHEBI:58069"/>
        <dbReference type="ChEBI" id="CHEBI:60377"/>
        <dbReference type="ChEBI" id="CHEBI:456216"/>
        <dbReference type="EC" id="2.7.4.25"/>
    </reaction>
</comment>
<comment type="catalytic activity">
    <reaction evidence="1">
        <text>dCMP + ATP = dCDP + ADP</text>
        <dbReference type="Rhea" id="RHEA:25094"/>
        <dbReference type="ChEBI" id="CHEBI:30616"/>
        <dbReference type="ChEBI" id="CHEBI:57566"/>
        <dbReference type="ChEBI" id="CHEBI:58593"/>
        <dbReference type="ChEBI" id="CHEBI:456216"/>
        <dbReference type="EC" id="2.7.4.25"/>
    </reaction>
</comment>
<comment type="subcellular location">
    <subcellularLocation>
        <location evidence="1">Cytoplasm</location>
    </subcellularLocation>
</comment>
<comment type="similarity">
    <text evidence="1">Belongs to the cytidylate kinase family. Type 1 subfamily.</text>
</comment>
<keyword id="KW-0067">ATP-binding</keyword>
<keyword id="KW-0963">Cytoplasm</keyword>
<keyword id="KW-0418">Kinase</keyword>
<keyword id="KW-0547">Nucleotide-binding</keyword>
<keyword id="KW-0808">Transferase</keyword>
<feature type="chain" id="PRO_1000100680" description="Cytidylate kinase">
    <location>
        <begin position="1"/>
        <end position="227"/>
    </location>
</feature>
<feature type="binding site" evidence="1">
    <location>
        <begin position="12"/>
        <end position="20"/>
    </location>
    <ligand>
        <name>ATP</name>
        <dbReference type="ChEBI" id="CHEBI:30616"/>
    </ligand>
</feature>
<organism>
    <name type="scientific">Salmonella dublin (strain CT_02021853)</name>
    <dbReference type="NCBI Taxonomy" id="439851"/>
    <lineage>
        <taxon>Bacteria</taxon>
        <taxon>Pseudomonadati</taxon>
        <taxon>Pseudomonadota</taxon>
        <taxon>Gammaproteobacteria</taxon>
        <taxon>Enterobacterales</taxon>
        <taxon>Enterobacteriaceae</taxon>
        <taxon>Salmonella</taxon>
    </lineage>
</organism>